<organism>
    <name type="scientific">Mycobacterium tuberculosis (strain ATCC 25618 / H37Rv)</name>
    <dbReference type="NCBI Taxonomy" id="83332"/>
    <lineage>
        <taxon>Bacteria</taxon>
        <taxon>Bacillati</taxon>
        <taxon>Actinomycetota</taxon>
        <taxon>Actinomycetes</taxon>
        <taxon>Mycobacteriales</taxon>
        <taxon>Mycobacteriaceae</taxon>
        <taxon>Mycobacterium</taxon>
        <taxon>Mycobacterium tuberculosis complex</taxon>
    </lineage>
</organism>
<comment type="function">
    <text evidence="1">May directly or indirectly regulate the accessibility of the key branch point intermediate, monoacyl phosphatidylinositol tetramannoside (AcPIM4), to the elongating alpha-1,6 mannosyltransferases which could regulate the lipoarabinomannans (LAMs) biosynthesis.</text>
</comment>
<comment type="pathway">
    <text>Phospholipid metabolism; phosphatidylinositol metabolism.</text>
</comment>
<comment type="similarity">
    <text evidence="4">Belongs to the bacterial solute-binding protein 5 family.</text>
</comment>
<proteinExistence type="evidence at protein level"/>
<accession>P9WGU7</accession>
<accession>L0T633</accession>
<accession>O50422</accession>
<accession>Q7D8Q4</accession>
<reference key="1">
    <citation type="journal article" date="1998" name="Nature">
        <title>Deciphering the biology of Mycobacterium tuberculosis from the complete genome sequence.</title>
        <authorList>
            <person name="Cole S.T."/>
            <person name="Brosch R."/>
            <person name="Parkhill J."/>
            <person name="Garnier T."/>
            <person name="Churcher C.M."/>
            <person name="Harris D.E."/>
            <person name="Gordon S.V."/>
            <person name="Eiglmeier K."/>
            <person name="Gas S."/>
            <person name="Barry C.E. III"/>
            <person name="Tekaia F."/>
            <person name="Badcock K."/>
            <person name="Basham D."/>
            <person name="Brown D."/>
            <person name="Chillingworth T."/>
            <person name="Connor R."/>
            <person name="Davies R.M."/>
            <person name="Devlin K."/>
            <person name="Feltwell T."/>
            <person name="Gentles S."/>
            <person name="Hamlin N."/>
            <person name="Holroyd S."/>
            <person name="Hornsby T."/>
            <person name="Jagels K."/>
            <person name="Krogh A."/>
            <person name="McLean J."/>
            <person name="Moule S."/>
            <person name="Murphy L.D."/>
            <person name="Oliver S."/>
            <person name="Osborne J."/>
            <person name="Quail M.A."/>
            <person name="Rajandream M.A."/>
            <person name="Rogers J."/>
            <person name="Rutter S."/>
            <person name="Seeger K."/>
            <person name="Skelton S."/>
            <person name="Squares S."/>
            <person name="Squares R."/>
            <person name="Sulston J.E."/>
            <person name="Taylor K."/>
            <person name="Whitehead S."/>
            <person name="Barrell B.G."/>
        </authorList>
    </citation>
    <scope>NUCLEOTIDE SEQUENCE [LARGE SCALE GENOMIC DNA]</scope>
    <source>
        <strain>ATCC 25618 / H37Rv</strain>
    </source>
</reference>
<reference key="2">
    <citation type="journal article" date="2011" name="Mol. Cell. Proteomics">
        <title>Proteogenomic analysis of Mycobacterium tuberculosis by high resolution mass spectrometry.</title>
        <authorList>
            <person name="Kelkar D.S."/>
            <person name="Kumar D."/>
            <person name="Kumar P."/>
            <person name="Balakrishnan L."/>
            <person name="Muthusamy B."/>
            <person name="Yadav A.K."/>
            <person name="Shrivastava P."/>
            <person name="Marimuthu A."/>
            <person name="Anand S."/>
            <person name="Sundaram H."/>
            <person name="Kingsbury R."/>
            <person name="Harsha H.C."/>
            <person name="Nair B."/>
            <person name="Prasad T.S."/>
            <person name="Chauhan D.S."/>
            <person name="Katoch K."/>
            <person name="Katoch V.M."/>
            <person name="Kumar P."/>
            <person name="Chaerkady R."/>
            <person name="Ramachandran S."/>
            <person name="Dash D."/>
            <person name="Pandey A."/>
        </authorList>
    </citation>
    <scope>IDENTIFICATION BY MASS SPECTROMETRY [LARGE SCALE ANALYSIS]</scope>
    <source>
        <strain>ATCC 25618 / H37Rv</strain>
    </source>
</reference>
<evidence type="ECO:0000250" key="1"/>
<evidence type="ECO:0000255" key="2"/>
<evidence type="ECO:0000256" key="3">
    <source>
        <dbReference type="SAM" id="MobiDB-lite"/>
    </source>
</evidence>
<evidence type="ECO:0000305" key="4"/>
<gene>
    <name type="primary">lpqW</name>
    <name type="ordered locus">Rv1166</name>
</gene>
<sequence>MGVPSPVRRVCVTVGALVALACMVLAGCTVSPPPAPQSTDTPRSTPPPPRRPTQIIMGIDWIGPGFNPHLLSDLSPVNAAISALVLPSAFRPIPDPNTPTGSRWEMDPTLLVSADVTNNHPFTVTYKIRPEAQWTDNAPIAADDFWYLWQQMVTQPGVVDPAGYHLITSVQSLEGGKQAVVTFAQPYPAWRELFTDILPAHIVKDIPGGFASGLARALPVTGGQFRVENIDPQRDEILIARNDRYWGPPSKPGIILFRRAGAPAALADSVRNGDTQVAQVHGGSAAFAQLSAIPDVRTARIVTPRVMQFTLRANVPKLADTQVRKAILGLLDVDLLAAVGAGTDNTVTLDQAQIRSPSDPGYVPTAPPAMSSAAALGLLEASGFQVDTNTSVSPAPSVPDSTTTSVSTGPPEVIRGRISKDGEQLTLVIGVAANDPTSVAVANTAADQLRDVGIAATVLALDPVTLYHDALNDNRVDAIVGWRQAGGNLATLLASRYGCPALQATTVPAANAPTTAPSAPIGPTPSAAPDTATPPPTAPRRPSDPGALVKAPSNLTGICDRSIQSNIDAALNGTKNINDVITAVEPRLWNMSTVLPILQDTTIVAAGPSVQNVSLSGAVPVGIVGDAGQWVKTGQ</sequence>
<keyword id="KW-0444">Lipid biosynthesis</keyword>
<keyword id="KW-0443">Lipid metabolism</keyword>
<keyword id="KW-0594">Phospholipid biosynthesis</keyword>
<keyword id="KW-1208">Phospholipid metabolism</keyword>
<keyword id="KW-1185">Reference proteome</keyword>
<keyword id="KW-0732">Signal</keyword>
<keyword id="KW-0843">Virulence</keyword>
<protein>
    <recommendedName>
        <fullName>Probable monoacyl phosphatidylinositol tetramannoside-binding protein LpqW</fullName>
    </recommendedName>
</protein>
<name>LPQW_MYCTU</name>
<feature type="signal peptide" evidence="2">
    <location>
        <begin position="1"/>
        <end position="26"/>
    </location>
</feature>
<feature type="chain" id="PRO_0000393727" description="Probable monoacyl phosphatidylinositol tetramannoside-binding protein LpqW">
    <location>
        <begin position="27"/>
        <end position="635"/>
    </location>
</feature>
<feature type="region of interest" description="Disordered" evidence="3">
    <location>
        <begin position="32"/>
        <end position="52"/>
    </location>
</feature>
<feature type="region of interest" description="Disordered" evidence="3">
    <location>
        <begin position="389"/>
        <end position="412"/>
    </location>
</feature>
<feature type="region of interest" description="Disordered" evidence="3">
    <location>
        <begin position="511"/>
        <end position="551"/>
    </location>
</feature>
<feature type="compositionally biased region" description="Low complexity" evidence="3">
    <location>
        <begin position="390"/>
        <end position="411"/>
    </location>
</feature>
<feature type="compositionally biased region" description="Low complexity" evidence="3">
    <location>
        <begin position="511"/>
        <end position="531"/>
    </location>
</feature>
<dbReference type="EMBL" id="AL123456">
    <property type="protein sequence ID" value="CCP43922.1"/>
    <property type="molecule type" value="Genomic_DNA"/>
</dbReference>
<dbReference type="PIR" id="F70874">
    <property type="entry name" value="F70874"/>
</dbReference>
<dbReference type="RefSeq" id="NP_215682.1">
    <property type="nucleotide sequence ID" value="NC_000962.3"/>
</dbReference>
<dbReference type="RefSeq" id="WP_003406102.1">
    <property type="nucleotide sequence ID" value="NZ_NVQJ01000025.1"/>
</dbReference>
<dbReference type="SMR" id="P9WGU7"/>
<dbReference type="STRING" id="83332.Rv1166"/>
<dbReference type="PaxDb" id="83332-Rv1166"/>
<dbReference type="DNASU" id="886036"/>
<dbReference type="GeneID" id="45425138"/>
<dbReference type="GeneID" id="886036"/>
<dbReference type="KEGG" id="mtu:Rv1166"/>
<dbReference type="KEGG" id="mtv:RVBD_1166"/>
<dbReference type="TubercuList" id="Rv1166"/>
<dbReference type="eggNOG" id="COG0747">
    <property type="taxonomic scope" value="Bacteria"/>
</dbReference>
<dbReference type="InParanoid" id="P9WGU7"/>
<dbReference type="OrthoDB" id="9803988at2"/>
<dbReference type="UniPathway" id="UPA00949"/>
<dbReference type="Proteomes" id="UP000001584">
    <property type="component" value="Chromosome"/>
</dbReference>
<dbReference type="GO" id="GO:0005576">
    <property type="term" value="C:extracellular region"/>
    <property type="evidence" value="ECO:0007005"/>
    <property type="project" value="MTBBASE"/>
</dbReference>
<dbReference type="GO" id="GO:0016020">
    <property type="term" value="C:membrane"/>
    <property type="evidence" value="ECO:0007669"/>
    <property type="project" value="GOC"/>
</dbReference>
<dbReference type="GO" id="GO:1904680">
    <property type="term" value="F:peptide transmembrane transporter activity"/>
    <property type="evidence" value="ECO:0000318"/>
    <property type="project" value="GO_Central"/>
</dbReference>
<dbReference type="GO" id="GO:0009247">
    <property type="term" value="P:glycolipid biosynthetic process"/>
    <property type="evidence" value="ECO:0000315"/>
    <property type="project" value="MTBBASE"/>
</dbReference>
<dbReference type="GO" id="GO:0015833">
    <property type="term" value="P:peptide transport"/>
    <property type="evidence" value="ECO:0000318"/>
    <property type="project" value="GO_Central"/>
</dbReference>
<dbReference type="GO" id="GO:0046488">
    <property type="term" value="P:phosphatidylinositol metabolic process"/>
    <property type="evidence" value="ECO:0007669"/>
    <property type="project" value="UniProtKB-UniPathway"/>
</dbReference>
<dbReference type="GO" id="GO:0008654">
    <property type="term" value="P:phospholipid biosynthetic process"/>
    <property type="evidence" value="ECO:0007669"/>
    <property type="project" value="UniProtKB-KW"/>
</dbReference>
<dbReference type="CDD" id="cd08501">
    <property type="entry name" value="PBP2_Lpqw"/>
    <property type="match status" value="1"/>
</dbReference>
<dbReference type="FunFam" id="3.90.76.10:FF:000006">
    <property type="entry name" value="Monoacyl phosphatidylinositol tetramannoside-binding protein"/>
    <property type="match status" value="1"/>
</dbReference>
<dbReference type="Gene3D" id="3.90.76.10">
    <property type="entry name" value="Dipeptide-binding Protein, Domain 1"/>
    <property type="match status" value="1"/>
</dbReference>
<dbReference type="Gene3D" id="3.10.105.10">
    <property type="entry name" value="Dipeptide-binding Protein, Domain 3"/>
    <property type="match status" value="1"/>
</dbReference>
<dbReference type="InterPro" id="IPR039424">
    <property type="entry name" value="SBP_5"/>
</dbReference>
<dbReference type="InterPro" id="IPR000914">
    <property type="entry name" value="SBP_5_dom"/>
</dbReference>
<dbReference type="PANTHER" id="PTHR30290:SF65">
    <property type="entry name" value="MONOACYL PHOSPHATIDYLINOSITOL TETRAMANNOSIDE-BINDING PROTEIN LPQW-RELATED"/>
    <property type="match status" value="1"/>
</dbReference>
<dbReference type="PANTHER" id="PTHR30290">
    <property type="entry name" value="PERIPLASMIC BINDING COMPONENT OF ABC TRANSPORTER"/>
    <property type="match status" value="1"/>
</dbReference>
<dbReference type="Pfam" id="PF00496">
    <property type="entry name" value="SBP_bac_5"/>
    <property type="match status" value="1"/>
</dbReference>
<dbReference type="SUPFAM" id="SSF53850">
    <property type="entry name" value="Periplasmic binding protein-like II"/>
    <property type="match status" value="1"/>
</dbReference>